<keyword id="KW-0012">Acyltransferase</keyword>
<keyword id="KW-0028">Amino-acid biosynthesis</keyword>
<keyword id="KW-0963">Cytoplasm</keyword>
<keyword id="KW-0486">Methionine biosynthesis</keyword>
<keyword id="KW-1185">Reference proteome</keyword>
<keyword id="KW-0808">Transferase</keyword>
<sequence>MPIRVPDELPAVNFLREENVFVMTTSRASGQEIRPLKVLILNLMPKKIETENQFLRLLSNSPLQVDIQLLRIDSRESRNTPAEHLNNFYCNFEDIQEQNFDGLIVTGAPLGLVEFNDVAYWPQIKQVLEWSKDHVTSTLFVCWAVQAALNILYGIPKQTRTDKLSGVYEHHILHPHALLTRGFDDSFLAPHSRYADFPAALIRDYTDLEILAETEEGDAYLFASKDKRIAFVTGHPEYDAQTLAQEYFRDVEAGLGPEVPYNYFPHNDPQNTPRASWRSHGNLLFTNWLNYYVYQITPYDLRHMNPTLD</sequence>
<comment type="function">
    <text evidence="1">Transfers a succinyl group from succinyl-CoA to L-homoserine, forming succinyl-L-homoserine.</text>
</comment>
<comment type="catalytic activity">
    <reaction evidence="1">
        <text>L-homoserine + succinyl-CoA = O-succinyl-L-homoserine + CoA</text>
        <dbReference type="Rhea" id="RHEA:22008"/>
        <dbReference type="ChEBI" id="CHEBI:57287"/>
        <dbReference type="ChEBI" id="CHEBI:57292"/>
        <dbReference type="ChEBI" id="CHEBI:57476"/>
        <dbReference type="ChEBI" id="CHEBI:57661"/>
        <dbReference type="EC" id="2.3.1.46"/>
    </reaction>
</comment>
<comment type="pathway">
    <text evidence="1">Amino-acid biosynthesis; L-methionine biosynthesis via de novo pathway; O-succinyl-L-homoserine from L-homoserine: step 1/1.</text>
</comment>
<comment type="subunit">
    <text evidence="1">Homodimer.</text>
</comment>
<comment type="subcellular location">
    <subcellularLocation>
        <location evidence="1">Cytoplasm</location>
    </subcellularLocation>
</comment>
<comment type="similarity">
    <text evidence="1">Belongs to the MetA family.</text>
</comment>
<dbReference type="EC" id="2.3.1.46" evidence="1"/>
<dbReference type="EMBL" id="CU928145">
    <property type="protein sequence ID" value="CAV01267.1"/>
    <property type="molecule type" value="Genomic_DNA"/>
</dbReference>
<dbReference type="SMR" id="B7LAV1"/>
<dbReference type="KEGG" id="eck:EC55989_4498"/>
<dbReference type="HOGENOM" id="CLU_057851_0_1_6"/>
<dbReference type="UniPathway" id="UPA00051">
    <property type="reaction ID" value="UER00075"/>
</dbReference>
<dbReference type="Proteomes" id="UP000000746">
    <property type="component" value="Chromosome"/>
</dbReference>
<dbReference type="GO" id="GO:0005737">
    <property type="term" value="C:cytoplasm"/>
    <property type="evidence" value="ECO:0007669"/>
    <property type="project" value="UniProtKB-SubCell"/>
</dbReference>
<dbReference type="GO" id="GO:0004414">
    <property type="term" value="F:homoserine O-acetyltransferase activity"/>
    <property type="evidence" value="ECO:0007669"/>
    <property type="project" value="UniProtKB-UniRule"/>
</dbReference>
<dbReference type="GO" id="GO:0008899">
    <property type="term" value="F:homoserine O-succinyltransferase activity"/>
    <property type="evidence" value="ECO:0007669"/>
    <property type="project" value="UniProtKB-EC"/>
</dbReference>
<dbReference type="GO" id="GO:0019281">
    <property type="term" value="P:L-methionine biosynthetic process from homoserine via O-succinyl-L-homoserine and cystathionine"/>
    <property type="evidence" value="ECO:0007669"/>
    <property type="project" value="InterPro"/>
</dbReference>
<dbReference type="CDD" id="cd03131">
    <property type="entry name" value="GATase1_HTS"/>
    <property type="match status" value="1"/>
</dbReference>
<dbReference type="FunFam" id="3.40.50.880:FF:000004">
    <property type="entry name" value="Homoserine O-succinyltransferase"/>
    <property type="match status" value="1"/>
</dbReference>
<dbReference type="Gene3D" id="3.40.50.880">
    <property type="match status" value="1"/>
</dbReference>
<dbReference type="HAMAP" id="MF_00295">
    <property type="entry name" value="MetA_acyltransf"/>
    <property type="match status" value="1"/>
</dbReference>
<dbReference type="InterPro" id="IPR029062">
    <property type="entry name" value="Class_I_gatase-like"/>
</dbReference>
<dbReference type="InterPro" id="IPR005697">
    <property type="entry name" value="HST_MetA"/>
</dbReference>
<dbReference type="InterPro" id="IPR033752">
    <property type="entry name" value="MetA_family"/>
</dbReference>
<dbReference type="NCBIfam" id="TIGR01001">
    <property type="entry name" value="metA"/>
    <property type="match status" value="1"/>
</dbReference>
<dbReference type="PANTHER" id="PTHR20919">
    <property type="entry name" value="HOMOSERINE O-SUCCINYLTRANSFERASE"/>
    <property type="match status" value="1"/>
</dbReference>
<dbReference type="PANTHER" id="PTHR20919:SF0">
    <property type="entry name" value="HOMOSERINE O-SUCCINYLTRANSFERASE"/>
    <property type="match status" value="1"/>
</dbReference>
<dbReference type="Pfam" id="PF04204">
    <property type="entry name" value="HTS"/>
    <property type="match status" value="1"/>
</dbReference>
<dbReference type="PIRSF" id="PIRSF000450">
    <property type="entry name" value="H_ser_succinyltr"/>
    <property type="match status" value="1"/>
</dbReference>
<dbReference type="SUPFAM" id="SSF52317">
    <property type="entry name" value="Class I glutamine amidotransferase-like"/>
    <property type="match status" value="1"/>
</dbReference>
<feature type="chain" id="PRO_1000191184" description="Homoserine O-succinyltransferase">
    <location>
        <begin position="1"/>
        <end position="309"/>
    </location>
</feature>
<feature type="active site" description="Acyl-thioester intermediate" evidence="1">
    <location>
        <position position="142"/>
    </location>
</feature>
<feature type="active site" description="Proton acceptor" evidence="1">
    <location>
        <position position="235"/>
    </location>
</feature>
<feature type="active site" evidence="1">
    <location>
        <position position="237"/>
    </location>
</feature>
<feature type="binding site" evidence="1">
    <location>
        <position position="163"/>
    </location>
    <ligand>
        <name>substrate</name>
    </ligand>
</feature>
<feature type="binding site" evidence="1">
    <location>
        <position position="192"/>
    </location>
    <ligand>
        <name>substrate</name>
    </ligand>
</feature>
<feature type="binding site" evidence="1">
    <location>
        <position position="249"/>
    </location>
    <ligand>
        <name>substrate</name>
    </ligand>
</feature>
<feature type="site" description="Important for acyl-CoA specificity" evidence="1">
    <location>
        <position position="111"/>
    </location>
</feature>
<feature type="site" description="Important for substrate specificity" evidence="1">
    <location>
        <position position="192"/>
    </location>
</feature>
<evidence type="ECO:0000255" key="1">
    <source>
        <dbReference type="HAMAP-Rule" id="MF_00295"/>
    </source>
</evidence>
<organism>
    <name type="scientific">Escherichia coli (strain 55989 / EAEC)</name>
    <dbReference type="NCBI Taxonomy" id="585055"/>
    <lineage>
        <taxon>Bacteria</taxon>
        <taxon>Pseudomonadati</taxon>
        <taxon>Pseudomonadota</taxon>
        <taxon>Gammaproteobacteria</taxon>
        <taxon>Enterobacterales</taxon>
        <taxon>Enterobacteriaceae</taxon>
        <taxon>Escherichia</taxon>
    </lineage>
</organism>
<gene>
    <name evidence="1" type="primary">metAS</name>
    <name type="ordered locus">EC55989_4498</name>
</gene>
<proteinExistence type="inferred from homology"/>
<protein>
    <recommendedName>
        <fullName evidence="1">Homoserine O-succinyltransferase</fullName>
        <shortName evidence="1">HST</shortName>
        <ecNumber evidence="1">2.3.1.46</ecNumber>
    </recommendedName>
    <alternativeName>
        <fullName evidence="1">Homoserine transsuccinylase</fullName>
        <shortName evidence="1">HTS</shortName>
    </alternativeName>
</protein>
<accession>B7LAV1</accession>
<name>METAS_ECO55</name>
<reference key="1">
    <citation type="journal article" date="2009" name="PLoS Genet.">
        <title>Organised genome dynamics in the Escherichia coli species results in highly diverse adaptive paths.</title>
        <authorList>
            <person name="Touchon M."/>
            <person name="Hoede C."/>
            <person name="Tenaillon O."/>
            <person name="Barbe V."/>
            <person name="Baeriswyl S."/>
            <person name="Bidet P."/>
            <person name="Bingen E."/>
            <person name="Bonacorsi S."/>
            <person name="Bouchier C."/>
            <person name="Bouvet O."/>
            <person name="Calteau A."/>
            <person name="Chiapello H."/>
            <person name="Clermont O."/>
            <person name="Cruveiller S."/>
            <person name="Danchin A."/>
            <person name="Diard M."/>
            <person name="Dossat C."/>
            <person name="Karoui M.E."/>
            <person name="Frapy E."/>
            <person name="Garry L."/>
            <person name="Ghigo J.M."/>
            <person name="Gilles A.M."/>
            <person name="Johnson J."/>
            <person name="Le Bouguenec C."/>
            <person name="Lescat M."/>
            <person name="Mangenot S."/>
            <person name="Martinez-Jehanne V."/>
            <person name="Matic I."/>
            <person name="Nassif X."/>
            <person name="Oztas S."/>
            <person name="Petit M.A."/>
            <person name="Pichon C."/>
            <person name="Rouy Z."/>
            <person name="Ruf C.S."/>
            <person name="Schneider D."/>
            <person name="Tourret J."/>
            <person name="Vacherie B."/>
            <person name="Vallenet D."/>
            <person name="Medigue C."/>
            <person name="Rocha E.P.C."/>
            <person name="Denamur E."/>
        </authorList>
    </citation>
    <scope>NUCLEOTIDE SEQUENCE [LARGE SCALE GENOMIC DNA]</scope>
    <source>
        <strain>55989 / EAEC</strain>
    </source>
</reference>